<comment type="similarity">
    <text evidence="1">Belongs to the universal stress protein A family.</text>
</comment>
<evidence type="ECO:0000305" key="1"/>
<dbReference type="EMBL" id="AE000666">
    <property type="protein sequence ID" value="AAB85643.1"/>
    <property type="molecule type" value="Genomic_DNA"/>
</dbReference>
<dbReference type="PIR" id="G69020">
    <property type="entry name" value="G69020"/>
</dbReference>
<dbReference type="SMR" id="O27222"/>
<dbReference type="STRING" id="187420.MTH_1154"/>
<dbReference type="PaxDb" id="187420-MTH_1154"/>
<dbReference type="EnsemblBacteria" id="AAB85643">
    <property type="protein sequence ID" value="AAB85643"/>
    <property type="gene ID" value="MTH_1154"/>
</dbReference>
<dbReference type="KEGG" id="mth:MTH_1154"/>
<dbReference type="PATRIC" id="fig|187420.15.peg.1131"/>
<dbReference type="HOGENOM" id="CLU_049301_11_1_2"/>
<dbReference type="InParanoid" id="O27222"/>
<dbReference type="Proteomes" id="UP000005223">
    <property type="component" value="Chromosome"/>
</dbReference>
<dbReference type="CDD" id="cd00293">
    <property type="entry name" value="USP-like"/>
    <property type="match status" value="1"/>
</dbReference>
<dbReference type="Gene3D" id="3.40.50.620">
    <property type="entry name" value="HUPs"/>
    <property type="match status" value="1"/>
</dbReference>
<dbReference type="InterPro" id="IPR014729">
    <property type="entry name" value="Rossmann-like_a/b/a_fold"/>
</dbReference>
<dbReference type="InterPro" id="IPR006015">
    <property type="entry name" value="Universal_stress_UspA"/>
</dbReference>
<dbReference type="InterPro" id="IPR006016">
    <property type="entry name" value="UspA"/>
</dbReference>
<dbReference type="PANTHER" id="PTHR46268">
    <property type="entry name" value="STRESS RESPONSE PROTEIN NHAX"/>
    <property type="match status" value="1"/>
</dbReference>
<dbReference type="PANTHER" id="PTHR46268:SF6">
    <property type="entry name" value="UNIVERSAL STRESS PROTEIN UP12"/>
    <property type="match status" value="1"/>
</dbReference>
<dbReference type="Pfam" id="PF00582">
    <property type="entry name" value="Usp"/>
    <property type="match status" value="1"/>
</dbReference>
<dbReference type="PRINTS" id="PR01438">
    <property type="entry name" value="UNVRSLSTRESS"/>
</dbReference>
<dbReference type="SUPFAM" id="SSF52402">
    <property type="entry name" value="Adenine nucleotide alpha hydrolases-like"/>
    <property type="match status" value="1"/>
</dbReference>
<accession>O27222</accession>
<reference key="1">
    <citation type="journal article" date="1997" name="J. Bacteriol.">
        <title>Complete genome sequence of Methanobacterium thermoautotrophicum deltaH: functional analysis and comparative genomics.</title>
        <authorList>
            <person name="Smith D.R."/>
            <person name="Doucette-Stamm L.A."/>
            <person name="Deloughery C."/>
            <person name="Lee H.-M."/>
            <person name="Dubois J."/>
            <person name="Aldredge T."/>
            <person name="Bashirzadeh R."/>
            <person name="Blakely D."/>
            <person name="Cook R."/>
            <person name="Gilbert K."/>
            <person name="Harrison D."/>
            <person name="Hoang L."/>
            <person name="Keagle P."/>
            <person name="Lumm W."/>
            <person name="Pothier B."/>
            <person name="Qiu D."/>
            <person name="Spadafora R."/>
            <person name="Vicare R."/>
            <person name="Wang Y."/>
            <person name="Wierzbowski J."/>
            <person name="Gibson R."/>
            <person name="Jiwani N."/>
            <person name="Caruso A."/>
            <person name="Bush D."/>
            <person name="Safer H."/>
            <person name="Patwell D."/>
            <person name="Prabhakar S."/>
            <person name="McDougall S."/>
            <person name="Shimer G."/>
            <person name="Goyal A."/>
            <person name="Pietrovski S."/>
            <person name="Church G.M."/>
            <person name="Daniels C.J."/>
            <person name="Mao J.-I."/>
            <person name="Rice P."/>
            <person name="Noelling J."/>
            <person name="Reeve J.N."/>
        </authorList>
    </citation>
    <scope>NUCLEOTIDE SEQUENCE [LARGE SCALE GENOMIC DNA]</scope>
    <source>
        <strain>ATCC 29096 / DSM 1053 / JCM 10044 / NBRC 100330 / Delta H</strain>
    </source>
</reference>
<feature type="chain" id="PRO_0000147447" description="Universal stress protein MTH_1154">
    <location>
        <begin position="1"/>
        <end position="146"/>
    </location>
</feature>
<name>Y1154_METTH</name>
<gene>
    <name type="ordered locus">MTH_1154</name>
</gene>
<sequence>MIEMYRKILVPTMGEYMDELIEHTLDLLHGREAEVICLYVVDTAVPFLTPKKVKEMMVKELTQRGNEILRDMEKGLTGPENPNVSFRAVMREGDPADEIVKVAEEEDVDVIVMGTGKSLVDKHLLGSVSEKVVHYAPCTIHLVRTV</sequence>
<keyword id="KW-1185">Reference proteome</keyword>
<protein>
    <recommendedName>
        <fullName>Universal stress protein MTH_1154</fullName>
        <shortName>USP MTH_1154</shortName>
    </recommendedName>
</protein>
<organism>
    <name type="scientific">Methanothermobacter thermautotrophicus (strain ATCC 29096 / DSM 1053 / JCM 10044 / NBRC 100330 / Delta H)</name>
    <name type="common">Methanobacterium thermoautotrophicum</name>
    <dbReference type="NCBI Taxonomy" id="187420"/>
    <lineage>
        <taxon>Archaea</taxon>
        <taxon>Methanobacteriati</taxon>
        <taxon>Methanobacteriota</taxon>
        <taxon>Methanomada group</taxon>
        <taxon>Methanobacteria</taxon>
        <taxon>Methanobacteriales</taxon>
        <taxon>Methanobacteriaceae</taxon>
        <taxon>Methanothermobacter</taxon>
    </lineage>
</organism>
<proteinExistence type="inferred from homology"/>